<evidence type="ECO:0000250" key="1"/>
<evidence type="ECO:0000255" key="2">
    <source>
        <dbReference type="PROSITE-ProRule" id="PRU00175"/>
    </source>
</evidence>
<evidence type="ECO:0000256" key="3">
    <source>
        <dbReference type="SAM" id="MobiDB-lite"/>
    </source>
</evidence>
<evidence type="ECO:0000269" key="4">
    <source>
    </source>
</evidence>
<evidence type="ECO:0000269" key="5">
    <source>
    </source>
</evidence>
<evidence type="ECO:0000269" key="6">
    <source>
    </source>
</evidence>
<evidence type="ECO:0000305" key="7"/>
<gene>
    <name type="primary">NFXL1</name>
    <name type="ordered locus">At1g10170</name>
    <name type="ORF">F14N23.5</name>
</gene>
<reference key="1">
    <citation type="journal article" date="2000" name="Nature">
        <title>Sequence and analysis of chromosome 1 of the plant Arabidopsis thaliana.</title>
        <authorList>
            <person name="Theologis A."/>
            <person name="Ecker J.R."/>
            <person name="Palm C.J."/>
            <person name="Federspiel N.A."/>
            <person name="Kaul S."/>
            <person name="White O."/>
            <person name="Alonso J."/>
            <person name="Altafi H."/>
            <person name="Araujo R."/>
            <person name="Bowman C.L."/>
            <person name="Brooks S.Y."/>
            <person name="Buehler E."/>
            <person name="Chan A."/>
            <person name="Chao Q."/>
            <person name="Chen H."/>
            <person name="Cheuk R.F."/>
            <person name="Chin C.W."/>
            <person name="Chung M.K."/>
            <person name="Conn L."/>
            <person name="Conway A.B."/>
            <person name="Conway A.R."/>
            <person name="Creasy T.H."/>
            <person name="Dewar K."/>
            <person name="Dunn P."/>
            <person name="Etgu P."/>
            <person name="Feldblyum T.V."/>
            <person name="Feng J.-D."/>
            <person name="Fong B."/>
            <person name="Fujii C.Y."/>
            <person name="Gill J.E."/>
            <person name="Goldsmith A.D."/>
            <person name="Haas B."/>
            <person name="Hansen N.F."/>
            <person name="Hughes B."/>
            <person name="Huizar L."/>
            <person name="Hunter J.L."/>
            <person name="Jenkins J."/>
            <person name="Johnson-Hopson C."/>
            <person name="Khan S."/>
            <person name="Khaykin E."/>
            <person name="Kim C.J."/>
            <person name="Koo H.L."/>
            <person name="Kremenetskaia I."/>
            <person name="Kurtz D.B."/>
            <person name="Kwan A."/>
            <person name="Lam B."/>
            <person name="Langin-Hooper S."/>
            <person name="Lee A."/>
            <person name="Lee J.M."/>
            <person name="Lenz C.A."/>
            <person name="Li J.H."/>
            <person name="Li Y.-P."/>
            <person name="Lin X."/>
            <person name="Liu S.X."/>
            <person name="Liu Z.A."/>
            <person name="Luros J.S."/>
            <person name="Maiti R."/>
            <person name="Marziali A."/>
            <person name="Militscher J."/>
            <person name="Miranda M."/>
            <person name="Nguyen M."/>
            <person name="Nierman W.C."/>
            <person name="Osborne B.I."/>
            <person name="Pai G."/>
            <person name="Peterson J."/>
            <person name="Pham P.K."/>
            <person name="Rizzo M."/>
            <person name="Rooney T."/>
            <person name="Rowley D."/>
            <person name="Sakano H."/>
            <person name="Salzberg S.L."/>
            <person name="Schwartz J.R."/>
            <person name="Shinn P."/>
            <person name="Southwick A.M."/>
            <person name="Sun H."/>
            <person name="Tallon L.J."/>
            <person name="Tambunga G."/>
            <person name="Toriumi M.J."/>
            <person name="Town C.D."/>
            <person name="Utterback T."/>
            <person name="Van Aken S."/>
            <person name="Vaysberg M."/>
            <person name="Vysotskaia V.S."/>
            <person name="Walker M."/>
            <person name="Wu D."/>
            <person name="Yu G."/>
            <person name="Fraser C.M."/>
            <person name="Venter J.C."/>
            <person name="Davis R.W."/>
        </authorList>
    </citation>
    <scope>NUCLEOTIDE SEQUENCE [LARGE SCALE GENOMIC DNA]</scope>
    <source>
        <strain>cv. Columbia</strain>
    </source>
</reference>
<reference key="2">
    <citation type="journal article" date="2017" name="Plant J.">
        <title>Araport11: a complete reannotation of the Arabidopsis thaliana reference genome.</title>
        <authorList>
            <person name="Cheng C.Y."/>
            <person name="Krishnakumar V."/>
            <person name="Chan A.P."/>
            <person name="Thibaud-Nissen F."/>
            <person name="Schobel S."/>
            <person name="Town C.D."/>
        </authorList>
    </citation>
    <scope>GENOME REANNOTATION</scope>
    <source>
        <strain>cv. Columbia</strain>
    </source>
</reference>
<reference key="3">
    <citation type="journal article" date="2006" name="FEBS Lett.">
        <title>The AtNFXL1 gene encodes a NF-X1 type zinc finger protein required for growth under salt stress.</title>
        <authorList>
            <person name="Lisso J."/>
            <person name="Altmann T."/>
            <person name="Muessig C."/>
        </authorList>
    </citation>
    <scope>FUNCTION</scope>
    <scope>DISRUPTION PHENOTYPE</scope>
    <scope>TISSUE SPECIFICITY</scope>
    <scope>SUBCELLULAR LOCATION</scope>
    <scope>INDUCTION BY OSMOTIC STRESS AND BRASSINOSTEROIDS</scope>
</reference>
<reference key="4">
    <citation type="journal article" date="2008" name="Plant J.">
        <title>AtNFXL1, an Arabidopsis homologue of the human transcription factor NF-X1, functions as a negative regulator of the trichothecene phytotoxin-induced defense response.</title>
        <authorList>
            <person name="Asano T."/>
            <person name="Masuda D."/>
            <person name="Yasuda M."/>
            <person name="Nakashita H."/>
            <person name="Kudo T."/>
            <person name="Kimura M."/>
            <person name="Yamaguchi K."/>
            <person name="Nishiuchi T."/>
        </authorList>
    </citation>
    <scope>FUNCTION</scope>
    <scope>SUBCELLULAR LOCATION</scope>
    <scope>DISRUPTION PHENOTYPE</scope>
    <scope>INDUCTION BY TRICHOTHECENES; BIOTIC AND ABIOTIC STRESSES</scope>
</reference>
<reference key="5">
    <citation type="journal article" date="2008" name="Plant Signal. Behav.">
        <title>The AtNFXL1 gene functions as a signaling component of the type A trichothecene-dependent response.</title>
        <authorList>
            <person name="Asano T."/>
            <person name="Yasuda M."/>
            <person name="Nakashita H."/>
            <person name="Kimura M."/>
            <person name="Yamaguchi K."/>
            <person name="Nishiuchi T."/>
        </authorList>
    </citation>
    <scope>FUNCTION</scope>
    <scope>INDUCTION BY TRICHOTHECENES</scope>
    <scope>DISRUPTION PHENOTYPE</scope>
</reference>
<reference key="6">
    <citation type="journal article" date="2010" name="Plant Biol.">
        <title>Structure and putative function of NFX1-like proteins in plants.</title>
        <authorList>
            <person name="Muessig C."/>
            <person name="Schroeder F."/>
            <person name="Usadel B."/>
            <person name="Lisso J."/>
        </authorList>
    </citation>
    <scope>REVIEW</scope>
</reference>
<dbReference type="EC" id="2.3.2.-"/>
<dbReference type="EMBL" id="AC005489">
    <property type="protein sequence ID" value="AAD32867.1"/>
    <property type="molecule type" value="Genomic_DNA"/>
</dbReference>
<dbReference type="EMBL" id="CP002684">
    <property type="protein sequence ID" value="AEE28549.1"/>
    <property type="molecule type" value="Genomic_DNA"/>
</dbReference>
<dbReference type="EMBL" id="CP002684">
    <property type="protein sequence ID" value="ANM60817.1"/>
    <property type="molecule type" value="Genomic_DNA"/>
</dbReference>
<dbReference type="PIR" id="D86236">
    <property type="entry name" value="D86236"/>
</dbReference>
<dbReference type="RefSeq" id="NP_001318968.1">
    <property type="nucleotide sequence ID" value="NM_001331888.1"/>
</dbReference>
<dbReference type="RefSeq" id="NP_172488.1">
    <property type="nucleotide sequence ID" value="NM_100891.3"/>
</dbReference>
<dbReference type="SMR" id="Q9SY59"/>
<dbReference type="BioGRID" id="22795">
    <property type="interactions" value="5"/>
</dbReference>
<dbReference type="FunCoup" id="Q9SY59">
    <property type="interactions" value="4432"/>
</dbReference>
<dbReference type="IntAct" id="Q9SY59">
    <property type="interactions" value="5"/>
</dbReference>
<dbReference type="STRING" id="3702.Q9SY59"/>
<dbReference type="PaxDb" id="3702-AT1G10170.1"/>
<dbReference type="ProteomicsDB" id="249433"/>
<dbReference type="EnsemblPlants" id="AT1G10170.1">
    <property type="protein sequence ID" value="AT1G10170.1"/>
    <property type="gene ID" value="AT1G10170"/>
</dbReference>
<dbReference type="EnsemblPlants" id="AT1G10170.3">
    <property type="protein sequence ID" value="AT1G10170.3"/>
    <property type="gene ID" value="AT1G10170"/>
</dbReference>
<dbReference type="GeneID" id="837555"/>
<dbReference type="Gramene" id="AT1G10170.1">
    <property type="protein sequence ID" value="AT1G10170.1"/>
    <property type="gene ID" value="AT1G10170"/>
</dbReference>
<dbReference type="Gramene" id="AT1G10170.3">
    <property type="protein sequence ID" value="AT1G10170.3"/>
    <property type="gene ID" value="AT1G10170"/>
</dbReference>
<dbReference type="KEGG" id="ath:AT1G10170"/>
<dbReference type="Araport" id="AT1G10170"/>
<dbReference type="TAIR" id="AT1G10170">
    <property type="gene designation" value="NFXL1"/>
</dbReference>
<dbReference type="eggNOG" id="KOG1952">
    <property type="taxonomic scope" value="Eukaryota"/>
</dbReference>
<dbReference type="HOGENOM" id="CLU_005714_4_0_1"/>
<dbReference type="InParanoid" id="Q9SY59"/>
<dbReference type="OMA" id="CPHPCDS"/>
<dbReference type="PhylomeDB" id="Q9SY59"/>
<dbReference type="UniPathway" id="UPA00143"/>
<dbReference type="PRO" id="PR:Q9SY59"/>
<dbReference type="Proteomes" id="UP000006548">
    <property type="component" value="Chromosome 1"/>
</dbReference>
<dbReference type="ExpressionAtlas" id="Q9SY59">
    <property type="expression patterns" value="baseline and differential"/>
</dbReference>
<dbReference type="GO" id="GO:0005634">
    <property type="term" value="C:nucleus"/>
    <property type="evidence" value="ECO:0000314"/>
    <property type="project" value="TAIR"/>
</dbReference>
<dbReference type="GO" id="GO:0003677">
    <property type="term" value="F:DNA binding"/>
    <property type="evidence" value="ECO:0007669"/>
    <property type="project" value="UniProtKB-KW"/>
</dbReference>
<dbReference type="GO" id="GO:0003700">
    <property type="term" value="F:DNA-binding transcription factor activity"/>
    <property type="evidence" value="ECO:0007669"/>
    <property type="project" value="InterPro"/>
</dbReference>
<dbReference type="GO" id="GO:0003729">
    <property type="term" value="F:mRNA binding"/>
    <property type="evidence" value="ECO:0000314"/>
    <property type="project" value="TAIR"/>
</dbReference>
<dbReference type="GO" id="GO:0016740">
    <property type="term" value="F:transferase activity"/>
    <property type="evidence" value="ECO:0007669"/>
    <property type="project" value="UniProtKB-KW"/>
</dbReference>
<dbReference type="GO" id="GO:0008270">
    <property type="term" value="F:zinc ion binding"/>
    <property type="evidence" value="ECO:0007669"/>
    <property type="project" value="UniProtKB-KW"/>
</dbReference>
<dbReference type="GO" id="GO:0042742">
    <property type="term" value="P:defense response to bacterium"/>
    <property type="evidence" value="ECO:0000315"/>
    <property type="project" value="TAIR"/>
</dbReference>
<dbReference type="GO" id="GO:0016567">
    <property type="term" value="P:protein ubiquitination"/>
    <property type="evidence" value="ECO:0007669"/>
    <property type="project" value="UniProtKB-UniPathway"/>
</dbReference>
<dbReference type="GO" id="GO:0010310">
    <property type="term" value="P:regulation of hydrogen peroxide metabolic process"/>
    <property type="evidence" value="ECO:0000315"/>
    <property type="project" value="UniProtKB"/>
</dbReference>
<dbReference type="GO" id="GO:0009642">
    <property type="term" value="P:response to light intensity"/>
    <property type="evidence" value="ECO:0000315"/>
    <property type="project" value="TAIR"/>
</dbReference>
<dbReference type="GO" id="GO:0010188">
    <property type="term" value="P:response to microbial phytotoxin"/>
    <property type="evidence" value="ECO:0000315"/>
    <property type="project" value="TAIR"/>
</dbReference>
<dbReference type="GO" id="GO:0009651">
    <property type="term" value="P:response to salt stress"/>
    <property type="evidence" value="ECO:0000315"/>
    <property type="project" value="TAIR"/>
</dbReference>
<dbReference type="GO" id="GO:0009697">
    <property type="term" value="P:salicylic acid biosynthetic process"/>
    <property type="evidence" value="ECO:0000315"/>
    <property type="project" value="TAIR"/>
</dbReference>
<dbReference type="CDD" id="cd06008">
    <property type="entry name" value="NF-X1-zinc-finger"/>
    <property type="match status" value="8"/>
</dbReference>
<dbReference type="CDD" id="cd16492">
    <property type="entry name" value="RING-CH-C4HC3_NFX1-like"/>
    <property type="match status" value="1"/>
</dbReference>
<dbReference type="InterPro" id="IPR034078">
    <property type="entry name" value="NFX1_fam"/>
</dbReference>
<dbReference type="InterPro" id="IPR056234">
    <property type="entry name" value="RRM_NFXL1"/>
</dbReference>
<dbReference type="InterPro" id="IPR000967">
    <property type="entry name" value="Znf_NFX1"/>
</dbReference>
<dbReference type="InterPro" id="IPR019787">
    <property type="entry name" value="Znf_PHD-finger"/>
</dbReference>
<dbReference type="InterPro" id="IPR001841">
    <property type="entry name" value="Znf_RING"/>
</dbReference>
<dbReference type="PANTHER" id="PTHR12360">
    <property type="entry name" value="NUCLEAR TRANSCRIPTION FACTOR, X-BOX BINDING 1 NFX1"/>
    <property type="match status" value="1"/>
</dbReference>
<dbReference type="PANTHER" id="PTHR12360:SF12">
    <property type="entry name" value="TRANSCRIPTIONAL REPRESSOR NF-X1"/>
    <property type="match status" value="1"/>
</dbReference>
<dbReference type="Pfam" id="PF24435">
    <property type="entry name" value="RRM_NFXL1"/>
    <property type="match status" value="1"/>
</dbReference>
<dbReference type="Pfam" id="PF01422">
    <property type="entry name" value="zf-NF-X1"/>
    <property type="match status" value="9"/>
</dbReference>
<dbReference type="SMART" id="SM00438">
    <property type="entry name" value="ZnF_NFX"/>
    <property type="match status" value="9"/>
</dbReference>
<dbReference type="SUPFAM" id="SSF57850">
    <property type="entry name" value="RING/U-box"/>
    <property type="match status" value="1"/>
</dbReference>
<dbReference type="PROSITE" id="PS01359">
    <property type="entry name" value="ZF_PHD_1"/>
    <property type="match status" value="1"/>
</dbReference>
<dbReference type="PROSITE" id="PS50016">
    <property type="entry name" value="ZF_PHD_2"/>
    <property type="match status" value="1"/>
</dbReference>
<dbReference type="PROSITE" id="PS50089">
    <property type="entry name" value="ZF_RING_2"/>
    <property type="match status" value="1"/>
</dbReference>
<organism>
    <name type="scientific">Arabidopsis thaliana</name>
    <name type="common">Mouse-ear cress</name>
    <dbReference type="NCBI Taxonomy" id="3702"/>
    <lineage>
        <taxon>Eukaryota</taxon>
        <taxon>Viridiplantae</taxon>
        <taxon>Streptophyta</taxon>
        <taxon>Embryophyta</taxon>
        <taxon>Tracheophyta</taxon>
        <taxon>Spermatophyta</taxon>
        <taxon>Magnoliopsida</taxon>
        <taxon>eudicotyledons</taxon>
        <taxon>Gunneridae</taxon>
        <taxon>Pentapetalae</taxon>
        <taxon>rosids</taxon>
        <taxon>malvids</taxon>
        <taxon>Brassicales</taxon>
        <taxon>Brassicaceae</taxon>
        <taxon>Camelineae</taxon>
        <taxon>Arabidopsis</taxon>
    </lineage>
</organism>
<feature type="chain" id="PRO_0000396835" description="NF-X1-type zinc finger protein NFXL1">
    <location>
        <begin position="1"/>
        <end position="1188"/>
    </location>
</feature>
<feature type="domain" description="R3H">
    <location>
        <begin position="894"/>
        <end position="963"/>
    </location>
</feature>
<feature type="zinc finger region" description="RING-type; degenerate" evidence="2">
    <location>
        <begin position="223"/>
        <end position="279"/>
    </location>
</feature>
<feature type="zinc finger region" description="NF-X1-type 1">
    <location>
        <begin position="335"/>
        <end position="353"/>
    </location>
</feature>
<feature type="zinc finger region" description="NF-X1-type 2">
    <location>
        <begin position="390"/>
        <end position="409"/>
    </location>
</feature>
<feature type="zinc finger region" description="NF-X1-type 3">
    <location>
        <begin position="454"/>
        <end position="473"/>
    </location>
</feature>
<feature type="zinc finger region" description="NF-X1-type 4">
    <location>
        <begin position="513"/>
        <end position="532"/>
    </location>
</feature>
<feature type="zinc finger region" description="NF-X1-type 5">
    <location>
        <begin position="572"/>
        <end position="607"/>
    </location>
</feature>
<feature type="zinc finger region" description="NF-X1-type 6">
    <location>
        <begin position="611"/>
        <end position="630"/>
    </location>
</feature>
<feature type="zinc finger region" description="NF-X1-type 7">
    <location>
        <begin position="668"/>
        <end position="686"/>
    </location>
</feature>
<feature type="zinc finger region" description="NF-X1-type 8">
    <location>
        <begin position="721"/>
        <end position="751"/>
    </location>
</feature>
<feature type="zinc finger region" description="NF-X1-type 9">
    <location>
        <begin position="760"/>
        <end position="781"/>
    </location>
</feature>
<feature type="region of interest" description="Disordered" evidence="3">
    <location>
        <begin position="1"/>
        <end position="52"/>
    </location>
</feature>
<feature type="region of interest" description="Disordered" evidence="3">
    <location>
        <begin position="65"/>
        <end position="195"/>
    </location>
</feature>
<feature type="region of interest" description="Disordered" evidence="3">
    <location>
        <begin position="1100"/>
        <end position="1188"/>
    </location>
</feature>
<feature type="compositionally biased region" description="Basic and acidic residues" evidence="3">
    <location>
        <begin position="1"/>
        <end position="15"/>
    </location>
</feature>
<feature type="compositionally biased region" description="Polar residues" evidence="3">
    <location>
        <begin position="19"/>
        <end position="34"/>
    </location>
</feature>
<feature type="compositionally biased region" description="Polar residues" evidence="3">
    <location>
        <begin position="168"/>
        <end position="186"/>
    </location>
</feature>
<feature type="compositionally biased region" description="Polar residues" evidence="3">
    <location>
        <begin position="1126"/>
        <end position="1138"/>
    </location>
</feature>
<feature type="compositionally biased region" description="Polar residues" evidence="3">
    <location>
        <begin position="1159"/>
        <end position="1169"/>
    </location>
</feature>
<accession>Q9SY59</accession>
<proteinExistence type="evidence at protein level"/>
<sequence length="1188" mass="130716">MSFQVRRDRSDDRSHRFNHQQTWIPRNSSTSSVVVNEPLLPPNTDRNSETLDAGSASRPVYLQRQHNASGPPSYNHHQRSSNIGPPPPNQHRRYNAPDNQHQRSDNIGPPQPNQHRRYNAPDNQHQRSDNSGPPQPYRHRRNNAPENQHQRSDNIGPPPPNRQRRNNASGTLPDNRQRVASRTRPVNQGKRVAKEENVVLTDPNLPQLVQELQEKLVKSSIECMICYDKVGRSANIWSCSSCYSIFHINCIKRWARAPTSVDLLAEKNQGDNWRCPGCQSVQLTSSKEISYRCFCGKRRDPPSDPYLTPHSCGEPCGKPLEKEFAPAETTEEDLCPHVCVLQCHPGPCPPCKAFAPPRSCPCGKKMVTTRCSERRSDLVCGQRCDKLLSCGRHQCERTCHVGPCDPCQVLVNATCFCKKKVETVICGDMNVKGELKAEDGVYSCSFNCGKPLGCGNHFCSEVCHPGPCGDCDLLPSRVKTCYCGNTRLEEQIRQSCLDPIPSCSNVCRKLLPCRLHTCNEMCHAGDCPPCLVQVNQKCRCGSTSRAVECYITTSSEAEKFVCAKPCGRKKNCGRHRCSERCCPLLNGKKNDLSGDWDPHVCQIPCQKKLRCGQHSCESLCHSGHCPPCLEMIFTDLTCACGRTSIPPPLSCGTPVPSCQLPCPIPQPCGHSDTHGCHFGDCPPCSTPVEKKCVGGHVVLRNIPCGLKDIRCTKICGKTRRCGMHACARTCHPEPCDSFNESEAGMRVTCRQKCGAPRTDCRHTCAALCHPSAPCPDLRCEFSVTITCSCGRITATVPCDAGGRSANGSNVYCAAYDEASVLQKLPAPLQPVESSGNRIPLGQRKLSCDDECAKLERKRVLQDAFDITPPNLEALHFSENSAMTEIISDLYRRDPKWVLAVEERCKFLVLGKARGSTSALKVHIFCPMQKDKRDTVRLIAERWKLGVSNAGWEPKRFTVVHVTAKSKPPTRIIGARGGAISIGGPHPPFYDSLVDMDPGLVVSFLDLPREANISALVLRFGGECELVWLNDKNALAVFHDHARAATAMRRLEHGSVYHGAVVVQSGGQSPSLNNVWGKLPGSSAWDVDKGNPWRRAVIQESDDSWGAEDSPIGGSSTDAQASALRSAKSNSPIVTSVNRWSVLEPKKASTSTLEPIAQIEESSSSKTTGKQPVEGSGEEVVDDWEKVCE</sequence>
<protein>
    <recommendedName>
        <fullName>NF-X1-type zinc finger protein NFXL1</fullName>
        <shortName>AtNFXL1</shortName>
        <ecNumber>2.3.2.-</ecNumber>
    </recommendedName>
</protein>
<comment type="function">
    <text evidence="1 4 5 6">Mediates E2-dependent ubiquitination (By similarity). Confers resistance to osmotic stress such as high salinity. Promotes H(2)O(2) production. Negative regulator of some defense-related genes via an salicylic acid (SA)-dependent signaling pathway. Confers susceptibility to the compatible phytopathogen Pseudomonas syringae pv. tomato strain DC3000 (Pst DC3000). Mediates resistance to type A trichothecenes (phytotoxins produced by phytopathogenic fungi).</text>
</comment>
<comment type="pathway">
    <text>Protein modification; protein ubiquitination.</text>
</comment>
<comment type="interaction">
    <interactant intactId="EBI-15201298">
        <id>Q9SY59</id>
    </interactant>
    <interactant intactId="EBI-15195245">
        <id>Q9ZW36</id>
        <label>At2g29580</label>
    </interactant>
    <organismsDiffer>false</organismsDiffer>
    <experiments>3</experiments>
</comment>
<comment type="subcellular location">
    <subcellularLocation>
        <location evidence="4 5">Nucleus</location>
    </subcellularLocation>
</comment>
<comment type="tissue specificity">
    <text evidence="4">Expressed in seedlings, roots, stems, leaves, buds, flowers and siliques.</text>
</comment>
<comment type="induction">
    <text evidence="4 5 6">By brassinosteroids, osmotic stress and high salinity. Accumulates in response to SA, ethylene, methyl jasmonate (MeJA), flagellin (e.g. flg22), and type A trichothecenes such as T-2 toxin and diacetoxyscirpenol (DAS), but not in response to type B trichothecenes such as deoxynivalenol (DON).</text>
</comment>
<comment type="domain">
    <text evidence="1">The RING-type zinc finger domain interacts with an ubiquitin-conjugating enzyme (E2) and facilitates ubiquitination.</text>
</comment>
<comment type="disruption phenotype">
    <text evidence="4 5 6">Impaired growth and survival under salt stress. Reduced H(2)O(2) production. Hypersensitivity to T-2 toxin and DAS (but not to DON), accompanied by enhanced SA accumulation and several plant defense gene induction. Less susceptible to Pst DC3000.</text>
</comment>
<comment type="similarity">
    <text evidence="7">Belongs to the NFX1 family.</text>
</comment>
<name>NFXL1_ARATH</name>
<keyword id="KW-0238">DNA-binding</keyword>
<keyword id="KW-0479">Metal-binding</keyword>
<keyword id="KW-0539">Nucleus</keyword>
<keyword id="KW-0611">Plant defense</keyword>
<keyword id="KW-1185">Reference proteome</keyword>
<keyword id="KW-0677">Repeat</keyword>
<keyword id="KW-0804">Transcription</keyword>
<keyword id="KW-0805">Transcription regulation</keyword>
<keyword id="KW-0808">Transferase</keyword>
<keyword id="KW-0833">Ubl conjugation pathway</keyword>
<keyword id="KW-0862">Zinc</keyword>
<keyword id="KW-0863">Zinc-finger</keyword>